<sequence>MTQKIRTRFAPSPTGFIHLGNIRSALYPWAFARATGGDFILRIEDTDVERSSQAAVDVIIEGMRWLGLDHDEGPFYQMQRMDRYKAVLAEMQAAGQVYPCYMSVAELDALREKQMAAKEKPRYDGTWRPEPGKTLPPIPAGVQPVLRFKNPQGGSVVWDDKVKGRIEISNDELDDLVIARPDGTPTYNFCVVVDDIDMAITHVIRGDDHVNNTPRQINIFRALGKDVPVYAHLPTVLNEQGEKMSKRNGAKPVTQYAAEGYLPDAMVNYLARLGWSHGDDEIFSREQFLKWFNLDHLGKSAAQFDEAKLRWVNAQHLKATADDKLAELVQPFLAARGVGLDTARMVGGCGLFKDRCSTLVELADWLQLLVTGGQPSAQDISTHVTEAVRPALGKLADALVACEWSKAAIAAAIKQVLAETGLKMPQLAMAVRVLVMGTPQTPSLDAILELMKREDVISRLKI</sequence>
<organism>
    <name type="scientific">Polaromonas sp. (strain JS666 / ATCC BAA-500)</name>
    <dbReference type="NCBI Taxonomy" id="296591"/>
    <lineage>
        <taxon>Bacteria</taxon>
        <taxon>Pseudomonadati</taxon>
        <taxon>Pseudomonadota</taxon>
        <taxon>Betaproteobacteria</taxon>
        <taxon>Burkholderiales</taxon>
        <taxon>Comamonadaceae</taxon>
        <taxon>Polaromonas</taxon>
    </lineage>
</organism>
<feature type="chain" id="PRO_1000001932" description="Glutamate--tRNA ligase">
    <location>
        <begin position="1"/>
        <end position="462"/>
    </location>
</feature>
<feature type="region of interest" description="Disordered" evidence="2">
    <location>
        <begin position="120"/>
        <end position="140"/>
    </location>
</feature>
<feature type="short sequence motif" description="'HIGH' region" evidence="1">
    <location>
        <begin position="11"/>
        <end position="21"/>
    </location>
</feature>
<feature type="short sequence motif" description="'KMSKS' region" evidence="1">
    <location>
        <begin position="243"/>
        <end position="247"/>
    </location>
</feature>
<feature type="compositionally biased region" description="Basic and acidic residues" evidence="2">
    <location>
        <begin position="120"/>
        <end position="131"/>
    </location>
</feature>
<feature type="binding site" evidence="1">
    <location>
        <position position="246"/>
    </location>
    <ligand>
        <name>ATP</name>
        <dbReference type="ChEBI" id="CHEBI:30616"/>
    </ligand>
</feature>
<dbReference type="EC" id="6.1.1.17" evidence="1"/>
<dbReference type="EMBL" id="CP000316">
    <property type="protein sequence ID" value="ABE43547.1"/>
    <property type="molecule type" value="Genomic_DNA"/>
</dbReference>
<dbReference type="RefSeq" id="WP_011482546.1">
    <property type="nucleotide sequence ID" value="NC_007948.1"/>
</dbReference>
<dbReference type="SMR" id="Q12D45"/>
<dbReference type="STRING" id="296591.Bpro_1609"/>
<dbReference type="KEGG" id="pol:Bpro_1609"/>
<dbReference type="eggNOG" id="COG0008">
    <property type="taxonomic scope" value="Bacteria"/>
</dbReference>
<dbReference type="HOGENOM" id="CLU_015768_6_0_4"/>
<dbReference type="OrthoDB" id="9807503at2"/>
<dbReference type="Proteomes" id="UP000001983">
    <property type="component" value="Chromosome"/>
</dbReference>
<dbReference type="GO" id="GO:0005829">
    <property type="term" value="C:cytosol"/>
    <property type="evidence" value="ECO:0007669"/>
    <property type="project" value="TreeGrafter"/>
</dbReference>
<dbReference type="GO" id="GO:0005524">
    <property type="term" value="F:ATP binding"/>
    <property type="evidence" value="ECO:0007669"/>
    <property type="project" value="UniProtKB-UniRule"/>
</dbReference>
<dbReference type="GO" id="GO:0004818">
    <property type="term" value="F:glutamate-tRNA ligase activity"/>
    <property type="evidence" value="ECO:0007669"/>
    <property type="project" value="UniProtKB-UniRule"/>
</dbReference>
<dbReference type="GO" id="GO:0000049">
    <property type="term" value="F:tRNA binding"/>
    <property type="evidence" value="ECO:0007669"/>
    <property type="project" value="InterPro"/>
</dbReference>
<dbReference type="GO" id="GO:0008270">
    <property type="term" value="F:zinc ion binding"/>
    <property type="evidence" value="ECO:0007669"/>
    <property type="project" value="InterPro"/>
</dbReference>
<dbReference type="GO" id="GO:0006424">
    <property type="term" value="P:glutamyl-tRNA aminoacylation"/>
    <property type="evidence" value="ECO:0007669"/>
    <property type="project" value="UniProtKB-UniRule"/>
</dbReference>
<dbReference type="CDD" id="cd00808">
    <property type="entry name" value="GluRS_core"/>
    <property type="match status" value="1"/>
</dbReference>
<dbReference type="FunFam" id="3.40.50.620:FF:000007">
    <property type="entry name" value="Glutamate--tRNA ligase"/>
    <property type="match status" value="1"/>
</dbReference>
<dbReference type="Gene3D" id="1.10.10.350">
    <property type="match status" value="1"/>
</dbReference>
<dbReference type="Gene3D" id="3.40.50.620">
    <property type="entry name" value="HUPs"/>
    <property type="match status" value="1"/>
</dbReference>
<dbReference type="HAMAP" id="MF_00022">
    <property type="entry name" value="Glu_tRNA_synth_type1"/>
    <property type="match status" value="1"/>
</dbReference>
<dbReference type="InterPro" id="IPR045462">
    <property type="entry name" value="aa-tRNA-synth_I_cd-bd"/>
</dbReference>
<dbReference type="InterPro" id="IPR020751">
    <property type="entry name" value="aa-tRNA-synth_I_codon-bd_sub2"/>
</dbReference>
<dbReference type="InterPro" id="IPR001412">
    <property type="entry name" value="aa-tRNA-synth_I_CS"/>
</dbReference>
<dbReference type="InterPro" id="IPR008925">
    <property type="entry name" value="aa_tRNA-synth_I_cd-bd_sf"/>
</dbReference>
<dbReference type="InterPro" id="IPR004527">
    <property type="entry name" value="Glu-tRNA-ligase_bac/mito"/>
</dbReference>
<dbReference type="InterPro" id="IPR000924">
    <property type="entry name" value="Glu/Gln-tRNA-synth"/>
</dbReference>
<dbReference type="InterPro" id="IPR020058">
    <property type="entry name" value="Glu/Gln-tRNA-synth_Ib_cat-dom"/>
</dbReference>
<dbReference type="InterPro" id="IPR049940">
    <property type="entry name" value="GluQ/Sye"/>
</dbReference>
<dbReference type="InterPro" id="IPR033910">
    <property type="entry name" value="GluRS_core"/>
</dbReference>
<dbReference type="InterPro" id="IPR014729">
    <property type="entry name" value="Rossmann-like_a/b/a_fold"/>
</dbReference>
<dbReference type="NCBIfam" id="TIGR00464">
    <property type="entry name" value="gltX_bact"/>
    <property type="match status" value="1"/>
</dbReference>
<dbReference type="PANTHER" id="PTHR43311">
    <property type="entry name" value="GLUTAMATE--TRNA LIGASE"/>
    <property type="match status" value="1"/>
</dbReference>
<dbReference type="PANTHER" id="PTHR43311:SF2">
    <property type="entry name" value="GLUTAMATE--TRNA LIGASE, MITOCHONDRIAL-RELATED"/>
    <property type="match status" value="1"/>
</dbReference>
<dbReference type="Pfam" id="PF19269">
    <property type="entry name" value="Anticodon_2"/>
    <property type="match status" value="1"/>
</dbReference>
<dbReference type="Pfam" id="PF00749">
    <property type="entry name" value="tRNA-synt_1c"/>
    <property type="match status" value="1"/>
</dbReference>
<dbReference type="PRINTS" id="PR00987">
    <property type="entry name" value="TRNASYNTHGLU"/>
</dbReference>
<dbReference type="SUPFAM" id="SSF48163">
    <property type="entry name" value="An anticodon-binding domain of class I aminoacyl-tRNA synthetases"/>
    <property type="match status" value="1"/>
</dbReference>
<dbReference type="SUPFAM" id="SSF52374">
    <property type="entry name" value="Nucleotidylyl transferase"/>
    <property type="match status" value="1"/>
</dbReference>
<dbReference type="PROSITE" id="PS00178">
    <property type="entry name" value="AA_TRNA_LIGASE_I"/>
    <property type="match status" value="1"/>
</dbReference>
<gene>
    <name evidence="1" type="primary">gltX</name>
    <name type="ordered locus">Bpro_1609</name>
</gene>
<name>SYE_POLSJ</name>
<protein>
    <recommendedName>
        <fullName evidence="1">Glutamate--tRNA ligase</fullName>
        <ecNumber evidence="1">6.1.1.17</ecNumber>
    </recommendedName>
    <alternativeName>
        <fullName evidence="1">Glutamyl-tRNA synthetase</fullName>
        <shortName evidence="1">GluRS</shortName>
    </alternativeName>
</protein>
<keyword id="KW-0030">Aminoacyl-tRNA synthetase</keyword>
<keyword id="KW-0067">ATP-binding</keyword>
<keyword id="KW-0963">Cytoplasm</keyword>
<keyword id="KW-0436">Ligase</keyword>
<keyword id="KW-0547">Nucleotide-binding</keyword>
<keyword id="KW-0648">Protein biosynthesis</keyword>
<keyword id="KW-1185">Reference proteome</keyword>
<evidence type="ECO:0000255" key="1">
    <source>
        <dbReference type="HAMAP-Rule" id="MF_00022"/>
    </source>
</evidence>
<evidence type="ECO:0000256" key="2">
    <source>
        <dbReference type="SAM" id="MobiDB-lite"/>
    </source>
</evidence>
<proteinExistence type="inferred from homology"/>
<comment type="function">
    <text evidence="1">Catalyzes the attachment of glutamate to tRNA(Glu) in a two-step reaction: glutamate is first activated by ATP to form Glu-AMP and then transferred to the acceptor end of tRNA(Glu).</text>
</comment>
<comment type="catalytic activity">
    <reaction evidence="1">
        <text>tRNA(Glu) + L-glutamate + ATP = L-glutamyl-tRNA(Glu) + AMP + diphosphate</text>
        <dbReference type="Rhea" id="RHEA:23540"/>
        <dbReference type="Rhea" id="RHEA-COMP:9663"/>
        <dbReference type="Rhea" id="RHEA-COMP:9680"/>
        <dbReference type="ChEBI" id="CHEBI:29985"/>
        <dbReference type="ChEBI" id="CHEBI:30616"/>
        <dbReference type="ChEBI" id="CHEBI:33019"/>
        <dbReference type="ChEBI" id="CHEBI:78442"/>
        <dbReference type="ChEBI" id="CHEBI:78520"/>
        <dbReference type="ChEBI" id="CHEBI:456215"/>
        <dbReference type="EC" id="6.1.1.17"/>
    </reaction>
</comment>
<comment type="subunit">
    <text evidence="1">Monomer.</text>
</comment>
<comment type="subcellular location">
    <subcellularLocation>
        <location evidence="1">Cytoplasm</location>
    </subcellularLocation>
</comment>
<comment type="similarity">
    <text evidence="1">Belongs to the class-I aminoacyl-tRNA synthetase family. Glutamate--tRNA ligase type 1 subfamily.</text>
</comment>
<reference key="1">
    <citation type="journal article" date="2008" name="Appl. Environ. Microbiol.">
        <title>The genome of Polaromonas sp. strain JS666: insights into the evolution of a hydrocarbon- and xenobiotic-degrading bacterium, and features of relevance to biotechnology.</title>
        <authorList>
            <person name="Mattes T.E."/>
            <person name="Alexander A.K."/>
            <person name="Richardson P.M."/>
            <person name="Munk A.C."/>
            <person name="Han C.S."/>
            <person name="Stothard P."/>
            <person name="Coleman N.V."/>
        </authorList>
    </citation>
    <scope>NUCLEOTIDE SEQUENCE [LARGE SCALE GENOMIC DNA]</scope>
    <source>
        <strain>JS666 / ATCC BAA-500</strain>
    </source>
</reference>
<accession>Q12D45</accession>